<comment type="function">
    <text evidence="1">Joins adenosylcobinamide-GDP and alpha-ribazole to generate adenosylcobalamin (Ado-cobalamin). Also synthesizes adenosylcobalamin 5'-phosphate from adenosylcobinamide-GDP and alpha-ribazole 5'-phosphate.</text>
</comment>
<comment type="catalytic activity">
    <reaction evidence="1">
        <text>alpha-ribazole + adenosylcob(III)inamide-GDP = adenosylcob(III)alamin + GMP + H(+)</text>
        <dbReference type="Rhea" id="RHEA:16049"/>
        <dbReference type="ChEBI" id="CHEBI:10329"/>
        <dbReference type="ChEBI" id="CHEBI:15378"/>
        <dbReference type="ChEBI" id="CHEBI:18408"/>
        <dbReference type="ChEBI" id="CHEBI:58115"/>
        <dbReference type="ChEBI" id="CHEBI:60487"/>
        <dbReference type="EC" id="2.7.8.26"/>
    </reaction>
</comment>
<comment type="catalytic activity">
    <reaction evidence="1">
        <text>alpha-ribazole 5'-phosphate + adenosylcob(III)inamide-GDP = adenosylcob(III)alamin 5'-phosphate + GMP + H(+)</text>
        <dbReference type="Rhea" id="RHEA:23560"/>
        <dbReference type="ChEBI" id="CHEBI:15378"/>
        <dbReference type="ChEBI" id="CHEBI:57918"/>
        <dbReference type="ChEBI" id="CHEBI:58115"/>
        <dbReference type="ChEBI" id="CHEBI:60487"/>
        <dbReference type="ChEBI" id="CHEBI:60493"/>
        <dbReference type="EC" id="2.7.8.26"/>
    </reaction>
</comment>
<comment type="cofactor">
    <cofactor evidence="1">
        <name>Mg(2+)</name>
        <dbReference type="ChEBI" id="CHEBI:18420"/>
    </cofactor>
</comment>
<comment type="pathway">
    <text evidence="1">Cofactor biosynthesis; adenosylcobalamin biosynthesis; adenosylcobalamin from cob(II)yrinate a,c-diamide: step 7/7.</text>
</comment>
<comment type="subcellular location">
    <subcellularLocation>
        <location evidence="1">Cell inner membrane</location>
        <topology evidence="1">Multi-pass membrane protein</topology>
    </subcellularLocation>
</comment>
<comment type="similarity">
    <text evidence="1">Belongs to the CobS family.</text>
</comment>
<sequence length="247" mass="26386">MSKLFWAMLAFISRLPVPSRWSQGLDFEQYSRGIVMFPFIGLILGGISGLIFILLQPWCGIPLAALFCILALALLTGGFHLDGLADTCDGIFSARRRERMLEIMRDSRLGTHGGLALIFVLLAKILVVSELALRGTPMLAALAAACAAGRGSAVLLMYRHRYAREEGLGNVFIGKVSGRQTCITLGLAVIVATVLLLGMQGLATMVVTLAAIFILGQLLKRTLGGQTGDTLGAAIELGELIFLLALL</sequence>
<feature type="chain" id="PRO_0000146894" description="Adenosylcobinamide-GDP ribazoletransferase">
    <location>
        <begin position="1"/>
        <end position="247"/>
    </location>
</feature>
<feature type="transmembrane region" description="Helical" evidence="1">
    <location>
        <begin position="34"/>
        <end position="54"/>
    </location>
</feature>
<feature type="transmembrane region" description="Helical" evidence="1">
    <location>
        <begin position="59"/>
        <end position="79"/>
    </location>
</feature>
<feature type="transmembrane region" description="Helical" evidence="1">
    <location>
        <begin position="113"/>
        <end position="133"/>
    </location>
</feature>
<feature type="transmembrane region" description="Helical" evidence="1">
    <location>
        <begin position="138"/>
        <end position="158"/>
    </location>
</feature>
<feature type="transmembrane region" description="Helical" evidence="1">
    <location>
        <begin position="194"/>
        <end position="214"/>
    </location>
</feature>
<reference key="1">
    <citation type="journal article" date="2001" name="Nature">
        <title>Complete genome sequence of a multiple drug resistant Salmonella enterica serovar Typhi CT18.</title>
        <authorList>
            <person name="Parkhill J."/>
            <person name="Dougan G."/>
            <person name="James K.D."/>
            <person name="Thomson N.R."/>
            <person name="Pickard D."/>
            <person name="Wain J."/>
            <person name="Churcher C.M."/>
            <person name="Mungall K.L."/>
            <person name="Bentley S.D."/>
            <person name="Holden M.T.G."/>
            <person name="Sebaihia M."/>
            <person name="Baker S."/>
            <person name="Basham D."/>
            <person name="Brooks K."/>
            <person name="Chillingworth T."/>
            <person name="Connerton P."/>
            <person name="Cronin A."/>
            <person name="Davis P."/>
            <person name="Davies R.M."/>
            <person name="Dowd L."/>
            <person name="White N."/>
            <person name="Farrar J."/>
            <person name="Feltwell T."/>
            <person name="Hamlin N."/>
            <person name="Haque A."/>
            <person name="Hien T.T."/>
            <person name="Holroyd S."/>
            <person name="Jagels K."/>
            <person name="Krogh A."/>
            <person name="Larsen T.S."/>
            <person name="Leather S."/>
            <person name="Moule S."/>
            <person name="O'Gaora P."/>
            <person name="Parry C."/>
            <person name="Quail M.A."/>
            <person name="Rutherford K.M."/>
            <person name="Simmonds M."/>
            <person name="Skelton J."/>
            <person name="Stevens K."/>
            <person name="Whitehead S."/>
            <person name="Barrell B.G."/>
        </authorList>
    </citation>
    <scope>NUCLEOTIDE SEQUENCE [LARGE SCALE GENOMIC DNA]</scope>
    <source>
        <strain>CT18</strain>
    </source>
</reference>
<reference key="2">
    <citation type="journal article" date="2003" name="J. Bacteriol.">
        <title>Comparative genomics of Salmonella enterica serovar Typhi strains Ty2 and CT18.</title>
        <authorList>
            <person name="Deng W."/>
            <person name="Liou S.-R."/>
            <person name="Plunkett G. III"/>
            <person name="Mayhew G.F."/>
            <person name="Rose D.J."/>
            <person name="Burland V."/>
            <person name="Kodoyianni V."/>
            <person name="Schwartz D.C."/>
            <person name="Blattner F.R."/>
        </authorList>
    </citation>
    <scope>NUCLEOTIDE SEQUENCE [LARGE SCALE GENOMIC DNA]</scope>
    <source>
        <strain>ATCC 700931 / Ty2</strain>
    </source>
</reference>
<evidence type="ECO:0000255" key="1">
    <source>
        <dbReference type="HAMAP-Rule" id="MF_00719"/>
    </source>
</evidence>
<organism>
    <name type="scientific">Salmonella typhi</name>
    <dbReference type="NCBI Taxonomy" id="90370"/>
    <lineage>
        <taxon>Bacteria</taxon>
        <taxon>Pseudomonadati</taxon>
        <taxon>Pseudomonadota</taxon>
        <taxon>Gammaproteobacteria</taxon>
        <taxon>Enterobacterales</taxon>
        <taxon>Enterobacteriaceae</taxon>
        <taxon>Salmonella</taxon>
    </lineage>
</organism>
<protein>
    <recommendedName>
        <fullName evidence="1">Adenosylcobinamide-GDP ribazoletransferase</fullName>
        <ecNumber evidence="1">2.7.8.26</ecNumber>
    </recommendedName>
    <alternativeName>
        <fullName evidence="1">Cobalamin synthase</fullName>
    </alternativeName>
    <alternativeName>
        <fullName evidence="1">Cobalamin-5'-phosphate synthase</fullName>
    </alternativeName>
</protein>
<gene>
    <name evidence="1" type="primary">cobS</name>
    <name type="ordered locus">STY2220</name>
    <name type="ordered locus">t0857</name>
</gene>
<keyword id="KW-0997">Cell inner membrane</keyword>
<keyword id="KW-1003">Cell membrane</keyword>
<keyword id="KW-0169">Cobalamin biosynthesis</keyword>
<keyword id="KW-0460">Magnesium</keyword>
<keyword id="KW-0472">Membrane</keyword>
<keyword id="KW-0808">Transferase</keyword>
<keyword id="KW-0812">Transmembrane</keyword>
<keyword id="KW-1133">Transmembrane helix</keyword>
<name>COBS_SALTI</name>
<dbReference type="EC" id="2.7.8.26" evidence="1"/>
<dbReference type="EMBL" id="AL513382">
    <property type="protein sequence ID" value="CAD02378.1"/>
    <property type="molecule type" value="Genomic_DNA"/>
</dbReference>
<dbReference type="EMBL" id="AE014613">
    <property type="protein sequence ID" value="AAO68541.1"/>
    <property type="molecule type" value="Genomic_DNA"/>
</dbReference>
<dbReference type="RefSeq" id="NP_456571.1">
    <property type="nucleotide sequence ID" value="NC_003198.1"/>
</dbReference>
<dbReference type="RefSeq" id="WP_000039987.1">
    <property type="nucleotide sequence ID" value="NZ_WSUR01000002.1"/>
</dbReference>
<dbReference type="STRING" id="220341.gene:17586133"/>
<dbReference type="KEGG" id="stt:t0857"/>
<dbReference type="KEGG" id="sty:STY2220"/>
<dbReference type="PATRIC" id="fig|220341.7.peg.2239"/>
<dbReference type="eggNOG" id="COG0368">
    <property type="taxonomic scope" value="Bacteria"/>
</dbReference>
<dbReference type="HOGENOM" id="CLU_057426_1_2_6"/>
<dbReference type="OMA" id="GHTGDTY"/>
<dbReference type="OrthoDB" id="9794626at2"/>
<dbReference type="UniPathway" id="UPA00148">
    <property type="reaction ID" value="UER00238"/>
</dbReference>
<dbReference type="Proteomes" id="UP000000541">
    <property type="component" value="Chromosome"/>
</dbReference>
<dbReference type="Proteomes" id="UP000002670">
    <property type="component" value="Chromosome"/>
</dbReference>
<dbReference type="GO" id="GO:0005886">
    <property type="term" value="C:plasma membrane"/>
    <property type="evidence" value="ECO:0007669"/>
    <property type="project" value="UniProtKB-SubCell"/>
</dbReference>
<dbReference type="GO" id="GO:0051073">
    <property type="term" value="F:adenosylcobinamide-GDP ribazoletransferase activity"/>
    <property type="evidence" value="ECO:0007669"/>
    <property type="project" value="UniProtKB-UniRule"/>
</dbReference>
<dbReference type="GO" id="GO:0008818">
    <property type="term" value="F:cobalamin 5'-phosphate synthase activity"/>
    <property type="evidence" value="ECO:0007669"/>
    <property type="project" value="UniProtKB-UniRule"/>
</dbReference>
<dbReference type="GO" id="GO:0009236">
    <property type="term" value="P:cobalamin biosynthetic process"/>
    <property type="evidence" value="ECO:0007669"/>
    <property type="project" value="UniProtKB-UniRule"/>
</dbReference>
<dbReference type="HAMAP" id="MF_00719">
    <property type="entry name" value="CobS"/>
    <property type="match status" value="1"/>
</dbReference>
<dbReference type="InterPro" id="IPR003805">
    <property type="entry name" value="CobS"/>
</dbReference>
<dbReference type="NCBIfam" id="TIGR00317">
    <property type="entry name" value="cobS"/>
    <property type="match status" value="1"/>
</dbReference>
<dbReference type="PANTHER" id="PTHR34148">
    <property type="entry name" value="ADENOSYLCOBINAMIDE-GDP RIBAZOLETRANSFERASE"/>
    <property type="match status" value="1"/>
</dbReference>
<dbReference type="PANTHER" id="PTHR34148:SF1">
    <property type="entry name" value="ADENOSYLCOBINAMIDE-GDP RIBAZOLETRANSFERASE"/>
    <property type="match status" value="1"/>
</dbReference>
<dbReference type="Pfam" id="PF02654">
    <property type="entry name" value="CobS"/>
    <property type="match status" value="1"/>
</dbReference>
<proteinExistence type="inferred from homology"/>
<accession>Q8Z5N8</accession>